<proteinExistence type="inferred from homology"/>
<comment type="function">
    <text evidence="1">This protein binds specifically to 23S rRNA; its binding is stimulated by other ribosomal proteins, e.g. L4, L17, and L20. It is important during the early stages of 50S assembly. It makes multiple contacts with different domains of the 23S rRNA in the assembled 50S subunit and ribosome (By similarity).</text>
</comment>
<comment type="function">
    <text evidence="1">The globular domain of the protein is located near the polypeptide exit tunnel on the outside of the subunit, while an extended beta-hairpin is found that lines the wall of the exit tunnel in the center of the 70S ribosome.</text>
</comment>
<comment type="subunit">
    <text evidence="1">Part of the 50S ribosomal subunit.</text>
</comment>
<comment type="similarity">
    <text evidence="1">Belongs to the universal ribosomal protein uL22 family.</text>
</comment>
<feature type="chain" id="PRO_1000052565" description="Large ribosomal subunit protein uL22">
    <location>
        <begin position="1"/>
        <end position="139"/>
    </location>
</feature>
<feature type="region of interest" description="Disordered" evidence="2">
    <location>
        <begin position="1"/>
        <end position="21"/>
    </location>
</feature>
<feature type="compositionally biased region" description="Basic residues" evidence="2">
    <location>
        <begin position="9"/>
        <end position="21"/>
    </location>
</feature>
<reference key="1">
    <citation type="submission" date="2006-04" db="EMBL/GenBank/DDBJ databases">
        <title>Complete sequence of chromosome of Deinococcus geothermalis DSM 11300.</title>
        <authorList>
            <person name="Copeland A."/>
            <person name="Lucas S."/>
            <person name="Lapidus A."/>
            <person name="Barry K."/>
            <person name="Detter J.C."/>
            <person name="Glavina del Rio T."/>
            <person name="Hammon N."/>
            <person name="Israni S."/>
            <person name="Dalin E."/>
            <person name="Tice H."/>
            <person name="Pitluck S."/>
            <person name="Brettin T."/>
            <person name="Bruce D."/>
            <person name="Han C."/>
            <person name="Tapia R."/>
            <person name="Saunders E."/>
            <person name="Gilna P."/>
            <person name="Schmutz J."/>
            <person name="Larimer F."/>
            <person name="Land M."/>
            <person name="Hauser L."/>
            <person name="Kyrpides N."/>
            <person name="Kim E."/>
            <person name="Daly M.J."/>
            <person name="Fredrickson J.K."/>
            <person name="Makarova K.S."/>
            <person name="Gaidamakova E.K."/>
            <person name="Zhai M."/>
            <person name="Richardson P."/>
        </authorList>
    </citation>
    <scope>NUCLEOTIDE SEQUENCE [LARGE SCALE GENOMIC DNA]</scope>
    <source>
        <strain>DSM 11300 / CIP 105573 / AG-3a</strain>
    </source>
</reference>
<organism>
    <name type="scientific">Deinococcus geothermalis (strain DSM 11300 / CIP 105573 / AG-3a)</name>
    <dbReference type="NCBI Taxonomy" id="319795"/>
    <lineage>
        <taxon>Bacteria</taxon>
        <taxon>Thermotogati</taxon>
        <taxon>Deinococcota</taxon>
        <taxon>Deinococci</taxon>
        <taxon>Deinococcales</taxon>
        <taxon>Deinococcaceae</taxon>
        <taxon>Deinococcus</taxon>
    </lineage>
</organism>
<sequence>MTAPEQTYRNKKQRKQQHKLRRPGYAIAKYVRMSPRKVRLVVDVIRGKSVAEAEDLLRFIPRAASEPVAKVLKSAKSNAINNDEMLEDRLVVAAAYVDAGPTLKRLLPRARGSANIIKKRTSHITIIVAERESLSRKGS</sequence>
<protein>
    <recommendedName>
        <fullName evidence="1">Large ribosomal subunit protein uL22</fullName>
    </recommendedName>
    <alternativeName>
        <fullName evidence="3">50S ribosomal protein L22</fullName>
    </alternativeName>
</protein>
<accession>Q1IX77</accession>
<evidence type="ECO:0000255" key="1">
    <source>
        <dbReference type="HAMAP-Rule" id="MF_01331"/>
    </source>
</evidence>
<evidence type="ECO:0000256" key="2">
    <source>
        <dbReference type="SAM" id="MobiDB-lite"/>
    </source>
</evidence>
<evidence type="ECO:0000305" key="3"/>
<gene>
    <name evidence="1" type="primary">rplV</name>
    <name type="ordered locus">Dgeo_1862</name>
</gene>
<keyword id="KW-0687">Ribonucleoprotein</keyword>
<keyword id="KW-0689">Ribosomal protein</keyword>
<keyword id="KW-0694">RNA-binding</keyword>
<keyword id="KW-0699">rRNA-binding</keyword>
<name>RL22_DEIGD</name>
<dbReference type="EMBL" id="CP000359">
    <property type="protein sequence ID" value="ABF46157.1"/>
    <property type="molecule type" value="Genomic_DNA"/>
</dbReference>
<dbReference type="RefSeq" id="WP_011530987.1">
    <property type="nucleotide sequence ID" value="NC_008025.1"/>
</dbReference>
<dbReference type="SMR" id="Q1IX77"/>
<dbReference type="STRING" id="319795.Dgeo_1862"/>
<dbReference type="KEGG" id="dge:Dgeo_1862"/>
<dbReference type="eggNOG" id="COG0091">
    <property type="taxonomic scope" value="Bacteria"/>
</dbReference>
<dbReference type="HOGENOM" id="CLU_083987_3_1_0"/>
<dbReference type="Proteomes" id="UP000002431">
    <property type="component" value="Chromosome"/>
</dbReference>
<dbReference type="GO" id="GO:0022625">
    <property type="term" value="C:cytosolic large ribosomal subunit"/>
    <property type="evidence" value="ECO:0007669"/>
    <property type="project" value="TreeGrafter"/>
</dbReference>
<dbReference type="GO" id="GO:0019843">
    <property type="term" value="F:rRNA binding"/>
    <property type="evidence" value="ECO:0007669"/>
    <property type="project" value="UniProtKB-UniRule"/>
</dbReference>
<dbReference type="GO" id="GO:0003735">
    <property type="term" value="F:structural constituent of ribosome"/>
    <property type="evidence" value="ECO:0007669"/>
    <property type="project" value="InterPro"/>
</dbReference>
<dbReference type="GO" id="GO:0006412">
    <property type="term" value="P:translation"/>
    <property type="evidence" value="ECO:0007669"/>
    <property type="project" value="UniProtKB-UniRule"/>
</dbReference>
<dbReference type="CDD" id="cd00336">
    <property type="entry name" value="Ribosomal_L22"/>
    <property type="match status" value="1"/>
</dbReference>
<dbReference type="FunFam" id="3.90.470.10:FF:000011">
    <property type="entry name" value="50S ribosomal protein L22"/>
    <property type="match status" value="1"/>
</dbReference>
<dbReference type="Gene3D" id="3.90.470.10">
    <property type="entry name" value="Ribosomal protein L22/L17"/>
    <property type="match status" value="1"/>
</dbReference>
<dbReference type="HAMAP" id="MF_01331_B">
    <property type="entry name" value="Ribosomal_uL22_B"/>
    <property type="match status" value="1"/>
</dbReference>
<dbReference type="InterPro" id="IPR001063">
    <property type="entry name" value="Ribosomal_uL22"/>
</dbReference>
<dbReference type="InterPro" id="IPR005727">
    <property type="entry name" value="Ribosomal_uL22_bac/chlpt-type"/>
</dbReference>
<dbReference type="InterPro" id="IPR047867">
    <property type="entry name" value="Ribosomal_uL22_bac/org-type"/>
</dbReference>
<dbReference type="InterPro" id="IPR018260">
    <property type="entry name" value="Ribosomal_uL22_CS"/>
</dbReference>
<dbReference type="InterPro" id="IPR036394">
    <property type="entry name" value="Ribosomal_uL22_sf"/>
</dbReference>
<dbReference type="NCBIfam" id="TIGR01044">
    <property type="entry name" value="rplV_bact"/>
    <property type="match status" value="1"/>
</dbReference>
<dbReference type="PANTHER" id="PTHR13501">
    <property type="entry name" value="CHLOROPLAST 50S RIBOSOMAL PROTEIN L22-RELATED"/>
    <property type="match status" value="1"/>
</dbReference>
<dbReference type="PANTHER" id="PTHR13501:SF8">
    <property type="entry name" value="LARGE RIBOSOMAL SUBUNIT PROTEIN UL22M"/>
    <property type="match status" value="1"/>
</dbReference>
<dbReference type="Pfam" id="PF00237">
    <property type="entry name" value="Ribosomal_L22"/>
    <property type="match status" value="1"/>
</dbReference>
<dbReference type="SUPFAM" id="SSF54843">
    <property type="entry name" value="Ribosomal protein L22"/>
    <property type="match status" value="1"/>
</dbReference>
<dbReference type="PROSITE" id="PS00464">
    <property type="entry name" value="RIBOSOMAL_L22"/>
    <property type="match status" value="1"/>
</dbReference>